<reference key="1">
    <citation type="journal article" date="1997" name="Microbiology">
        <title>Nucleotide sequence and analysis of the phoB-rrnE-groESL region of the Bacillus subtilis chromosome.</title>
        <authorList>
            <person name="Sadaie Y."/>
            <person name="Yata K."/>
            <person name="Fujita M."/>
            <person name="Sagai H."/>
            <person name="Itaya M."/>
            <person name="Kasahara Y."/>
            <person name="Ogasawara N."/>
        </authorList>
    </citation>
    <scope>NUCLEOTIDE SEQUENCE [GENOMIC DNA]</scope>
    <source>
        <strain>168</strain>
    </source>
</reference>
<reference key="2">
    <citation type="journal article" date="1997" name="Nature">
        <title>The complete genome sequence of the Gram-positive bacterium Bacillus subtilis.</title>
        <authorList>
            <person name="Kunst F."/>
            <person name="Ogasawara N."/>
            <person name="Moszer I."/>
            <person name="Albertini A.M."/>
            <person name="Alloni G."/>
            <person name="Azevedo V."/>
            <person name="Bertero M.G."/>
            <person name="Bessieres P."/>
            <person name="Bolotin A."/>
            <person name="Borchert S."/>
            <person name="Borriss R."/>
            <person name="Boursier L."/>
            <person name="Brans A."/>
            <person name="Braun M."/>
            <person name="Brignell S.C."/>
            <person name="Bron S."/>
            <person name="Brouillet S."/>
            <person name="Bruschi C.V."/>
            <person name="Caldwell B."/>
            <person name="Capuano V."/>
            <person name="Carter N.M."/>
            <person name="Choi S.-K."/>
            <person name="Codani J.-J."/>
            <person name="Connerton I.F."/>
            <person name="Cummings N.J."/>
            <person name="Daniel R.A."/>
            <person name="Denizot F."/>
            <person name="Devine K.M."/>
            <person name="Duesterhoeft A."/>
            <person name="Ehrlich S.D."/>
            <person name="Emmerson P.T."/>
            <person name="Entian K.-D."/>
            <person name="Errington J."/>
            <person name="Fabret C."/>
            <person name="Ferrari E."/>
            <person name="Foulger D."/>
            <person name="Fritz C."/>
            <person name="Fujita M."/>
            <person name="Fujita Y."/>
            <person name="Fuma S."/>
            <person name="Galizzi A."/>
            <person name="Galleron N."/>
            <person name="Ghim S.-Y."/>
            <person name="Glaser P."/>
            <person name="Goffeau A."/>
            <person name="Golightly E.J."/>
            <person name="Grandi G."/>
            <person name="Guiseppi G."/>
            <person name="Guy B.J."/>
            <person name="Haga K."/>
            <person name="Haiech J."/>
            <person name="Harwood C.R."/>
            <person name="Henaut A."/>
            <person name="Hilbert H."/>
            <person name="Holsappel S."/>
            <person name="Hosono S."/>
            <person name="Hullo M.-F."/>
            <person name="Itaya M."/>
            <person name="Jones L.-M."/>
            <person name="Joris B."/>
            <person name="Karamata D."/>
            <person name="Kasahara Y."/>
            <person name="Klaerr-Blanchard M."/>
            <person name="Klein C."/>
            <person name="Kobayashi Y."/>
            <person name="Koetter P."/>
            <person name="Koningstein G."/>
            <person name="Krogh S."/>
            <person name="Kumano M."/>
            <person name="Kurita K."/>
            <person name="Lapidus A."/>
            <person name="Lardinois S."/>
            <person name="Lauber J."/>
            <person name="Lazarevic V."/>
            <person name="Lee S.-M."/>
            <person name="Levine A."/>
            <person name="Liu H."/>
            <person name="Masuda S."/>
            <person name="Mauel C."/>
            <person name="Medigue C."/>
            <person name="Medina N."/>
            <person name="Mellado R.P."/>
            <person name="Mizuno M."/>
            <person name="Moestl D."/>
            <person name="Nakai S."/>
            <person name="Noback M."/>
            <person name="Noone D."/>
            <person name="O'Reilly M."/>
            <person name="Ogawa K."/>
            <person name="Ogiwara A."/>
            <person name="Oudega B."/>
            <person name="Park S.-H."/>
            <person name="Parro V."/>
            <person name="Pohl T.M."/>
            <person name="Portetelle D."/>
            <person name="Porwollik S."/>
            <person name="Prescott A.M."/>
            <person name="Presecan E."/>
            <person name="Pujic P."/>
            <person name="Purnelle B."/>
            <person name="Rapoport G."/>
            <person name="Rey M."/>
            <person name="Reynolds S."/>
            <person name="Rieger M."/>
            <person name="Rivolta C."/>
            <person name="Rocha E."/>
            <person name="Roche B."/>
            <person name="Rose M."/>
            <person name="Sadaie Y."/>
            <person name="Sato T."/>
            <person name="Scanlan E."/>
            <person name="Schleich S."/>
            <person name="Schroeter R."/>
            <person name="Scoffone F."/>
            <person name="Sekiguchi J."/>
            <person name="Sekowska A."/>
            <person name="Seror S.J."/>
            <person name="Serror P."/>
            <person name="Shin B.-S."/>
            <person name="Soldo B."/>
            <person name="Sorokin A."/>
            <person name="Tacconi E."/>
            <person name="Takagi T."/>
            <person name="Takahashi H."/>
            <person name="Takemaru K."/>
            <person name="Takeuchi M."/>
            <person name="Tamakoshi A."/>
            <person name="Tanaka T."/>
            <person name="Terpstra P."/>
            <person name="Tognoni A."/>
            <person name="Tosato V."/>
            <person name="Uchiyama S."/>
            <person name="Vandenbol M."/>
            <person name="Vannier F."/>
            <person name="Vassarotti A."/>
            <person name="Viari A."/>
            <person name="Wambutt R."/>
            <person name="Wedler E."/>
            <person name="Wedler H."/>
            <person name="Weitzenegger T."/>
            <person name="Winters P."/>
            <person name="Wipat A."/>
            <person name="Yamamoto H."/>
            <person name="Yamane K."/>
            <person name="Yasumoto K."/>
            <person name="Yata K."/>
            <person name="Yoshida K."/>
            <person name="Yoshikawa H.-F."/>
            <person name="Zumstein E."/>
            <person name="Yoshikawa H."/>
            <person name="Danchin A."/>
        </authorList>
    </citation>
    <scope>NUCLEOTIDE SEQUENCE [LARGE SCALE GENOMIC DNA]</scope>
    <source>
        <strain>168</strain>
    </source>
</reference>
<name>RIMI_BACSU</name>
<keyword id="KW-0012">Acyltransferase</keyword>
<keyword id="KW-0963">Cytoplasm</keyword>
<keyword id="KW-1185">Reference proteome</keyword>
<keyword id="KW-0808">Transferase</keyword>
<feature type="chain" id="PRO_0000360195" description="Putative [ribosomal protein bS18]-alanine N-acetyltransferase">
    <location>
        <begin position="1"/>
        <end position="151"/>
    </location>
</feature>
<feature type="domain" description="N-acetyltransferase" evidence="3">
    <location>
        <begin position="5"/>
        <end position="150"/>
    </location>
</feature>
<feature type="active site" description="Proton acceptor" evidence="2">
    <location>
        <position position="108"/>
    </location>
</feature>
<feature type="active site" description="Proton donor" evidence="2">
    <location>
        <position position="120"/>
    </location>
</feature>
<feature type="binding site" evidence="2">
    <location>
        <begin position="74"/>
        <end position="76"/>
    </location>
    <ligand>
        <name>acetyl-CoA</name>
        <dbReference type="ChEBI" id="CHEBI:57288"/>
    </ligand>
</feature>
<feature type="binding site" evidence="2">
    <location>
        <position position="113"/>
    </location>
    <ligand>
        <name>acetyl-CoA</name>
        <dbReference type="ChEBI" id="CHEBI:57288"/>
    </ligand>
</feature>
<accession>O05517</accession>
<accession>Q797D4</accession>
<sequence>MKTKAAVRNMRLEDIDHVYEIEASSFTSPWTKDSFYHELLENPYAHYLVIEKDGHLAGYCGIWIVMDDAQITNIAIKPEYRGQSLGETLFRSAVELCKEKDARRLSLEVRVSNHPAQGLYKKFGMQPGGIRKNYYTDNGEDALIMWVTINE</sequence>
<evidence type="ECO:0000250" key="1">
    <source>
        <dbReference type="UniProtKB" id="P0A944"/>
    </source>
</evidence>
<evidence type="ECO:0000250" key="2">
    <source>
        <dbReference type="UniProtKB" id="Q8ZJW4"/>
    </source>
</evidence>
<evidence type="ECO:0000255" key="3">
    <source>
        <dbReference type="PROSITE-ProRule" id="PRU00532"/>
    </source>
</evidence>
<evidence type="ECO:0000305" key="4"/>
<proteinExistence type="inferred from homology"/>
<comment type="function">
    <text evidence="1">Acetylates the N-terminal alanine of ribosomal protein bS18.</text>
</comment>
<comment type="catalytic activity">
    <reaction evidence="1">
        <text>N-terminal L-alanyl-[ribosomal protein bS18] + acetyl-CoA = N-terminal N(alpha)-acetyl-L-alanyl-[ribosomal protein bS18] + CoA + H(+)</text>
        <dbReference type="Rhea" id="RHEA:43756"/>
        <dbReference type="Rhea" id="RHEA-COMP:10676"/>
        <dbReference type="Rhea" id="RHEA-COMP:10677"/>
        <dbReference type="ChEBI" id="CHEBI:15378"/>
        <dbReference type="ChEBI" id="CHEBI:57287"/>
        <dbReference type="ChEBI" id="CHEBI:57288"/>
        <dbReference type="ChEBI" id="CHEBI:64718"/>
        <dbReference type="ChEBI" id="CHEBI:83683"/>
        <dbReference type="EC" id="2.3.1.266"/>
    </reaction>
</comment>
<comment type="subcellular location">
    <subcellularLocation>
        <location evidence="1">Cytoplasm</location>
    </subcellularLocation>
</comment>
<comment type="similarity">
    <text evidence="4">Belongs to the acetyltransferase family. RimI subfamily.</text>
</comment>
<gene>
    <name type="primary">rimI</name>
    <name type="synonym">ydiD</name>
    <name type="ordered locus">BSU05930</name>
</gene>
<dbReference type="EC" id="2.3.1.266" evidence="1"/>
<dbReference type="EMBL" id="D88802">
    <property type="protein sequence ID" value="BAA19717.1"/>
    <property type="molecule type" value="Genomic_DNA"/>
</dbReference>
<dbReference type="EMBL" id="AL009126">
    <property type="protein sequence ID" value="CAB12412.1"/>
    <property type="molecule type" value="Genomic_DNA"/>
</dbReference>
<dbReference type="PIR" id="E69786">
    <property type="entry name" value="E69786"/>
</dbReference>
<dbReference type="RefSeq" id="NP_388474.1">
    <property type="nucleotide sequence ID" value="NC_000964.3"/>
</dbReference>
<dbReference type="RefSeq" id="WP_003243019.1">
    <property type="nucleotide sequence ID" value="NZ_OZ025638.1"/>
</dbReference>
<dbReference type="SMR" id="O05517"/>
<dbReference type="FunCoup" id="O05517">
    <property type="interactions" value="592"/>
</dbReference>
<dbReference type="STRING" id="224308.BSU05930"/>
<dbReference type="PaxDb" id="224308-BSU05930"/>
<dbReference type="DNASU" id="937997"/>
<dbReference type="EnsemblBacteria" id="CAB12412">
    <property type="protein sequence ID" value="CAB12412"/>
    <property type="gene ID" value="BSU_05930"/>
</dbReference>
<dbReference type="GeneID" id="86874969"/>
<dbReference type="GeneID" id="937997"/>
<dbReference type="KEGG" id="bsu:BSU05930"/>
<dbReference type="PATRIC" id="fig|224308.179.peg.638"/>
<dbReference type="eggNOG" id="COG0456">
    <property type="taxonomic scope" value="Bacteria"/>
</dbReference>
<dbReference type="InParanoid" id="O05517"/>
<dbReference type="OrthoDB" id="9794566at2"/>
<dbReference type="PhylomeDB" id="O05517"/>
<dbReference type="BioCyc" id="BSUB:BSU05930-MONOMER"/>
<dbReference type="Proteomes" id="UP000001570">
    <property type="component" value="Chromosome"/>
</dbReference>
<dbReference type="GO" id="GO:0005737">
    <property type="term" value="C:cytoplasm"/>
    <property type="evidence" value="ECO:0007669"/>
    <property type="project" value="UniProtKB-SubCell"/>
</dbReference>
<dbReference type="GO" id="GO:0008999">
    <property type="term" value="F:protein-N-terminal-alanine acetyltransferase activity"/>
    <property type="evidence" value="ECO:0007669"/>
    <property type="project" value="UniProtKB-EC"/>
</dbReference>
<dbReference type="CDD" id="cd04301">
    <property type="entry name" value="NAT_SF"/>
    <property type="match status" value="1"/>
</dbReference>
<dbReference type="Gene3D" id="3.40.630.30">
    <property type="match status" value="1"/>
</dbReference>
<dbReference type="InterPro" id="IPR006464">
    <property type="entry name" value="AcTrfase_RimI/Ard1"/>
</dbReference>
<dbReference type="InterPro" id="IPR016181">
    <property type="entry name" value="Acyl_CoA_acyltransferase"/>
</dbReference>
<dbReference type="InterPro" id="IPR000182">
    <property type="entry name" value="GNAT_dom"/>
</dbReference>
<dbReference type="InterPro" id="IPR050680">
    <property type="entry name" value="YpeA/RimI_acetyltransf"/>
</dbReference>
<dbReference type="NCBIfam" id="TIGR01575">
    <property type="entry name" value="rimI"/>
    <property type="match status" value="1"/>
</dbReference>
<dbReference type="PANTHER" id="PTHR43420">
    <property type="entry name" value="ACETYLTRANSFERASE"/>
    <property type="match status" value="1"/>
</dbReference>
<dbReference type="PANTHER" id="PTHR43420:SF44">
    <property type="entry name" value="ACETYLTRANSFERASE YPEA"/>
    <property type="match status" value="1"/>
</dbReference>
<dbReference type="Pfam" id="PF00583">
    <property type="entry name" value="Acetyltransf_1"/>
    <property type="match status" value="1"/>
</dbReference>
<dbReference type="SUPFAM" id="SSF55729">
    <property type="entry name" value="Acyl-CoA N-acyltransferases (Nat)"/>
    <property type="match status" value="1"/>
</dbReference>
<dbReference type="PROSITE" id="PS51186">
    <property type="entry name" value="GNAT"/>
    <property type="match status" value="1"/>
</dbReference>
<organism>
    <name type="scientific">Bacillus subtilis (strain 168)</name>
    <dbReference type="NCBI Taxonomy" id="224308"/>
    <lineage>
        <taxon>Bacteria</taxon>
        <taxon>Bacillati</taxon>
        <taxon>Bacillota</taxon>
        <taxon>Bacilli</taxon>
        <taxon>Bacillales</taxon>
        <taxon>Bacillaceae</taxon>
        <taxon>Bacillus</taxon>
    </lineage>
</organism>
<protein>
    <recommendedName>
        <fullName evidence="1">Putative [ribosomal protein bS18]-alanine N-acetyltransferase</fullName>
        <ecNumber evidence="1">2.3.1.266</ecNumber>
    </recommendedName>
    <alternativeName>
        <fullName>Acetylating enzyme for N-terminus of ribosomal protein bS18</fullName>
    </alternativeName>
</protein>